<reference key="1">
    <citation type="journal article" date="2007" name="PLoS Biol.">
        <title>Evolution of symbiotic bacteria in the distal human intestine.</title>
        <authorList>
            <person name="Xu J."/>
            <person name="Mahowald M.A."/>
            <person name="Ley R.E."/>
            <person name="Lozupone C.A."/>
            <person name="Hamady M."/>
            <person name="Martens E.C."/>
            <person name="Henrissat B."/>
            <person name="Coutinho P.M."/>
            <person name="Minx P."/>
            <person name="Latreille P."/>
            <person name="Cordum H."/>
            <person name="Van Brunt A."/>
            <person name="Kim K."/>
            <person name="Fulton R.S."/>
            <person name="Fulton L.A."/>
            <person name="Clifton S.W."/>
            <person name="Wilson R.K."/>
            <person name="Knight R.D."/>
            <person name="Gordon J.I."/>
        </authorList>
    </citation>
    <scope>NUCLEOTIDE SEQUENCE [LARGE SCALE GENOMIC DNA]</scope>
    <source>
        <strain>ATCC 8482 / DSM 1447 / JCM 5826 / CCUG 4940 / NBRC 14291 / NCTC 11154</strain>
    </source>
</reference>
<organism>
    <name type="scientific">Phocaeicola vulgatus (strain ATCC 8482 / DSM 1447 / JCM 5826 / CCUG 4940 / NBRC 14291 / NCTC 11154)</name>
    <name type="common">Bacteroides vulgatus</name>
    <dbReference type="NCBI Taxonomy" id="435590"/>
    <lineage>
        <taxon>Bacteria</taxon>
        <taxon>Pseudomonadati</taxon>
        <taxon>Bacteroidota</taxon>
        <taxon>Bacteroidia</taxon>
        <taxon>Bacteroidales</taxon>
        <taxon>Bacteroidaceae</taxon>
        <taxon>Phocaeicola</taxon>
    </lineage>
</organism>
<feature type="chain" id="PRO_1000009294" description="Leucine--tRNA ligase">
    <location>
        <begin position="1"/>
        <end position="944"/>
    </location>
</feature>
<feature type="short sequence motif" description="'HIGH' region">
    <location>
        <begin position="40"/>
        <end position="51"/>
    </location>
</feature>
<feature type="short sequence motif" description="'KMSKS' region">
    <location>
        <begin position="718"/>
        <end position="722"/>
    </location>
</feature>
<feature type="binding site" evidence="1">
    <location>
        <position position="721"/>
    </location>
    <ligand>
        <name>ATP</name>
        <dbReference type="ChEBI" id="CHEBI:30616"/>
    </ligand>
</feature>
<name>SYL_PHOV8</name>
<protein>
    <recommendedName>
        <fullName evidence="1">Leucine--tRNA ligase</fullName>
        <ecNumber evidence="1">6.1.1.4</ecNumber>
    </recommendedName>
    <alternativeName>
        <fullName evidence="1">Leucyl-tRNA synthetase</fullName>
        <shortName evidence="1">LeuRS</shortName>
    </alternativeName>
</protein>
<sequence>MEYNFREIEKKWQQRWAENHTYQVTEDESKKKFYVLNMFPYPSGAGLHVGHPLGYIASDIYARYKRLQGFNVLNPMGYDAYGLPAEQYAIQTGQHPAITTVNNINRYREQLDKIGFSFDWNREVRTCEPGYYHWTQWAFQQMFNSYYCNDTQQARPISELTEAFARYGNEGLNAACSEELSFTAEEWNAKSEKEQQEILMNYRIAYLGETMVNWCPQLGTVLANDEVVDGVSERGGFPVVQKKMRQWCLRVSAYAQRLLDGLDTVDWTDSLKETQRNWIGRSEGTEVQFKVKDSDIEFTIFTTRADTMFGVTFMVLAPESELVPQLTTEAQKAEVEAYLDRTKKRTERERIADRRVTGVFSGSYAINPFTGEAVPVWISDYVLAGYGTGAIMAVPAHDSRDYAFAKHFNLPIVPLVEGCDVSEESFDAKEGIVCNSPRKDVTPYCDLSLNGLTIKEAIAATKEYVKAHNLGRVKVNYRLRDAIFSRQRYWGEPFPVYYKNGMPYMIDSSKLPLELPEVAKFLPTETGEPPLGHATKWAWDVEKGEVVENNLIDNVTIFPLELNTMPGFAGSSAYYLRYMDPHNAQALVSEKADHYWQNVDLYVGGTEHATGHLIYSRFWNKFLHDLGVSIKEEPFQKLVNQGMIQGRSNFVYRIKDTNTFVSLNLKDQYETTPLHVDVNIVSNDILDVEAFKAWRPEYNDAEFILEDGKYICGWAVEKMSKSMYNVVNPDMIVEKYGADTLRMYEMFLGPVEQSKPWDTNGIDGVHRFLKKLWNLFYSRTDEFLPVEGEPTKEELKAIHKLIKKVTGDIETFSYNTSISAFMICVNELTSLKCRNKEVLSNLIILLAPFAPHYAEELWEALGNTTSVCDAQWPAFNEDYLKEDTVKYTISFNGKARFTMDFAADADNNTIQTTVMADEQAQKWIEGKTPKKVIIVPKKIVNIVL</sequence>
<gene>
    <name evidence="1" type="primary">leuS</name>
    <name type="ordered locus">BVU_1149</name>
</gene>
<dbReference type="EC" id="6.1.1.4" evidence="1"/>
<dbReference type="EMBL" id="CP000139">
    <property type="protein sequence ID" value="ABR38840.1"/>
    <property type="molecule type" value="Genomic_DNA"/>
</dbReference>
<dbReference type="RefSeq" id="WP_005849960.1">
    <property type="nucleotide sequence ID" value="NZ_CAXUBK010000012.1"/>
</dbReference>
<dbReference type="SMR" id="A6KZH6"/>
<dbReference type="STRING" id="435590.BVU_1149"/>
<dbReference type="PaxDb" id="435590-BVU_1149"/>
<dbReference type="GeneID" id="5302115"/>
<dbReference type="KEGG" id="bvu:BVU_1149"/>
<dbReference type="eggNOG" id="COG0495">
    <property type="taxonomic scope" value="Bacteria"/>
</dbReference>
<dbReference type="HOGENOM" id="CLU_004427_0_0_10"/>
<dbReference type="BioCyc" id="BVUL435590:G1G59-1196-MONOMER"/>
<dbReference type="Proteomes" id="UP000002861">
    <property type="component" value="Chromosome"/>
</dbReference>
<dbReference type="GO" id="GO:0005829">
    <property type="term" value="C:cytosol"/>
    <property type="evidence" value="ECO:0007669"/>
    <property type="project" value="TreeGrafter"/>
</dbReference>
<dbReference type="GO" id="GO:0002161">
    <property type="term" value="F:aminoacyl-tRNA deacylase activity"/>
    <property type="evidence" value="ECO:0007669"/>
    <property type="project" value="InterPro"/>
</dbReference>
<dbReference type="GO" id="GO:0005524">
    <property type="term" value="F:ATP binding"/>
    <property type="evidence" value="ECO:0007669"/>
    <property type="project" value="UniProtKB-UniRule"/>
</dbReference>
<dbReference type="GO" id="GO:0004823">
    <property type="term" value="F:leucine-tRNA ligase activity"/>
    <property type="evidence" value="ECO:0007669"/>
    <property type="project" value="UniProtKB-UniRule"/>
</dbReference>
<dbReference type="GO" id="GO:0006429">
    <property type="term" value="P:leucyl-tRNA aminoacylation"/>
    <property type="evidence" value="ECO:0007669"/>
    <property type="project" value="UniProtKB-UniRule"/>
</dbReference>
<dbReference type="CDD" id="cd07958">
    <property type="entry name" value="Anticodon_Ia_Leu_BEm"/>
    <property type="match status" value="1"/>
</dbReference>
<dbReference type="FunFam" id="3.40.50.620:FF:000056">
    <property type="entry name" value="Leucine--tRNA ligase"/>
    <property type="match status" value="1"/>
</dbReference>
<dbReference type="FunFam" id="3.40.50.620:FF:000060">
    <property type="entry name" value="Leucine--tRNA ligase"/>
    <property type="match status" value="1"/>
</dbReference>
<dbReference type="FunFam" id="3.40.50.620:FF:000154">
    <property type="entry name" value="Leucine--tRNA ligase"/>
    <property type="match status" value="1"/>
</dbReference>
<dbReference type="FunFam" id="1.10.730.10:FF:000011">
    <property type="entry name" value="Leucine--tRNA ligase chloroplastic/mitochondrial"/>
    <property type="match status" value="1"/>
</dbReference>
<dbReference type="Gene3D" id="3.40.50.620">
    <property type="entry name" value="HUPs"/>
    <property type="match status" value="3"/>
</dbReference>
<dbReference type="Gene3D" id="1.10.730.10">
    <property type="entry name" value="Isoleucyl-tRNA Synthetase, Domain 1"/>
    <property type="match status" value="1"/>
</dbReference>
<dbReference type="HAMAP" id="MF_00049_B">
    <property type="entry name" value="Leu_tRNA_synth_B"/>
    <property type="match status" value="1"/>
</dbReference>
<dbReference type="InterPro" id="IPR001412">
    <property type="entry name" value="aa-tRNA-synth_I_CS"/>
</dbReference>
<dbReference type="InterPro" id="IPR002300">
    <property type="entry name" value="aa-tRNA-synth_Ia"/>
</dbReference>
<dbReference type="InterPro" id="IPR002302">
    <property type="entry name" value="Leu-tRNA-ligase"/>
</dbReference>
<dbReference type="InterPro" id="IPR025709">
    <property type="entry name" value="Leu_tRNA-synth_edit"/>
</dbReference>
<dbReference type="InterPro" id="IPR013155">
    <property type="entry name" value="M/V/L/I-tRNA-synth_anticd-bd"/>
</dbReference>
<dbReference type="InterPro" id="IPR014729">
    <property type="entry name" value="Rossmann-like_a/b/a_fold"/>
</dbReference>
<dbReference type="InterPro" id="IPR009080">
    <property type="entry name" value="tRNAsynth_Ia_anticodon-bd"/>
</dbReference>
<dbReference type="InterPro" id="IPR009008">
    <property type="entry name" value="Val/Leu/Ile-tRNA-synth_edit"/>
</dbReference>
<dbReference type="NCBIfam" id="TIGR00396">
    <property type="entry name" value="leuS_bact"/>
    <property type="match status" value="1"/>
</dbReference>
<dbReference type="PANTHER" id="PTHR43740:SF2">
    <property type="entry name" value="LEUCINE--TRNA LIGASE, MITOCHONDRIAL"/>
    <property type="match status" value="1"/>
</dbReference>
<dbReference type="PANTHER" id="PTHR43740">
    <property type="entry name" value="LEUCYL-TRNA SYNTHETASE"/>
    <property type="match status" value="1"/>
</dbReference>
<dbReference type="Pfam" id="PF08264">
    <property type="entry name" value="Anticodon_1"/>
    <property type="match status" value="1"/>
</dbReference>
<dbReference type="Pfam" id="PF00133">
    <property type="entry name" value="tRNA-synt_1"/>
    <property type="match status" value="1"/>
</dbReference>
<dbReference type="Pfam" id="PF13603">
    <property type="entry name" value="tRNA-synt_1_2"/>
    <property type="match status" value="1"/>
</dbReference>
<dbReference type="PRINTS" id="PR00985">
    <property type="entry name" value="TRNASYNTHLEU"/>
</dbReference>
<dbReference type="SUPFAM" id="SSF47323">
    <property type="entry name" value="Anticodon-binding domain of a subclass of class I aminoacyl-tRNA synthetases"/>
    <property type="match status" value="1"/>
</dbReference>
<dbReference type="SUPFAM" id="SSF52374">
    <property type="entry name" value="Nucleotidylyl transferase"/>
    <property type="match status" value="1"/>
</dbReference>
<dbReference type="SUPFAM" id="SSF50677">
    <property type="entry name" value="ValRS/IleRS/LeuRS editing domain"/>
    <property type="match status" value="1"/>
</dbReference>
<dbReference type="PROSITE" id="PS00178">
    <property type="entry name" value="AA_TRNA_LIGASE_I"/>
    <property type="match status" value="1"/>
</dbReference>
<accession>A6KZH6</accession>
<comment type="catalytic activity">
    <reaction evidence="1">
        <text>tRNA(Leu) + L-leucine + ATP = L-leucyl-tRNA(Leu) + AMP + diphosphate</text>
        <dbReference type="Rhea" id="RHEA:11688"/>
        <dbReference type="Rhea" id="RHEA-COMP:9613"/>
        <dbReference type="Rhea" id="RHEA-COMP:9622"/>
        <dbReference type="ChEBI" id="CHEBI:30616"/>
        <dbReference type="ChEBI" id="CHEBI:33019"/>
        <dbReference type="ChEBI" id="CHEBI:57427"/>
        <dbReference type="ChEBI" id="CHEBI:78442"/>
        <dbReference type="ChEBI" id="CHEBI:78494"/>
        <dbReference type="ChEBI" id="CHEBI:456215"/>
        <dbReference type="EC" id="6.1.1.4"/>
    </reaction>
</comment>
<comment type="subcellular location">
    <subcellularLocation>
        <location evidence="1">Cytoplasm</location>
    </subcellularLocation>
</comment>
<comment type="similarity">
    <text evidence="1">Belongs to the class-I aminoacyl-tRNA synthetase family.</text>
</comment>
<keyword id="KW-0030">Aminoacyl-tRNA synthetase</keyword>
<keyword id="KW-0067">ATP-binding</keyword>
<keyword id="KW-0963">Cytoplasm</keyword>
<keyword id="KW-0436">Ligase</keyword>
<keyword id="KW-0547">Nucleotide-binding</keyword>
<keyword id="KW-0648">Protein biosynthesis</keyword>
<evidence type="ECO:0000255" key="1">
    <source>
        <dbReference type="HAMAP-Rule" id="MF_00049"/>
    </source>
</evidence>
<proteinExistence type="inferred from homology"/>